<dbReference type="EC" id="3.4.11.1" evidence="1"/>
<dbReference type="EC" id="3.4.11.10" evidence="1"/>
<dbReference type="EMBL" id="CP000802">
    <property type="protein sequence ID" value="ABV08670.1"/>
    <property type="molecule type" value="Genomic_DNA"/>
</dbReference>
<dbReference type="RefSeq" id="WP_000397144.1">
    <property type="nucleotide sequence ID" value="NC_009800.1"/>
</dbReference>
<dbReference type="SMR" id="A8A816"/>
<dbReference type="MEROPS" id="M17.003"/>
<dbReference type="GeneID" id="93777558"/>
<dbReference type="KEGG" id="ecx:EcHS_A4516"/>
<dbReference type="HOGENOM" id="CLU_013734_2_2_6"/>
<dbReference type="GO" id="GO:0005737">
    <property type="term" value="C:cytoplasm"/>
    <property type="evidence" value="ECO:0007669"/>
    <property type="project" value="UniProtKB-SubCell"/>
</dbReference>
<dbReference type="GO" id="GO:0030145">
    <property type="term" value="F:manganese ion binding"/>
    <property type="evidence" value="ECO:0007669"/>
    <property type="project" value="UniProtKB-UniRule"/>
</dbReference>
<dbReference type="GO" id="GO:0070006">
    <property type="term" value="F:metalloaminopeptidase activity"/>
    <property type="evidence" value="ECO:0007669"/>
    <property type="project" value="InterPro"/>
</dbReference>
<dbReference type="GO" id="GO:0006508">
    <property type="term" value="P:proteolysis"/>
    <property type="evidence" value="ECO:0007669"/>
    <property type="project" value="UniProtKB-KW"/>
</dbReference>
<dbReference type="CDD" id="cd00433">
    <property type="entry name" value="Peptidase_M17"/>
    <property type="match status" value="1"/>
</dbReference>
<dbReference type="FunFam" id="3.40.220.10:FF:000001">
    <property type="entry name" value="Probable cytosol aminopeptidase"/>
    <property type="match status" value="1"/>
</dbReference>
<dbReference type="FunFam" id="3.40.630.10:FF:000004">
    <property type="entry name" value="Probable cytosol aminopeptidase"/>
    <property type="match status" value="1"/>
</dbReference>
<dbReference type="Gene3D" id="3.40.220.10">
    <property type="entry name" value="Leucine Aminopeptidase, subunit E, domain 1"/>
    <property type="match status" value="1"/>
</dbReference>
<dbReference type="Gene3D" id="3.40.630.10">
    <property type="entry name" value="Zn peptidases"/>
    <property type="match status" value="1"/>
</dbReference>
<dbReference type="HAMAP" id="MF_00181">
    <property type="entry name" value="Cytosol_peptidase_M17"/>
    <property type="match status" value="1"/>
</dbReference>
<dbReference type="InterPro" id="IPR011356">
    <property type="entry name" value="Leucine_aapep/pepB"/>
</dbReference>
<dbReference type="InterPro" id="IPR043472">
    <property type="entry name" value="Macro_dom-like"/>
</dbReference>
<dbReference type="InterPro" id="IPR000819">
    <property type="entry name" value="Peptidase_M17_C"/>
</dbReference>
<dbReference type="InterPro" id="IPR023042">
    <property type="entry name" value="Peptidase_M17_leu_NH2_pept"/>
</dbReference>
<dbReference type="InterPro" id="IPR008283">
    <property type="entry name" value="Peptidase_M17_N"/>
</dbReference>
<dbReference type="NCBIfam" id="NF002072">
    <property type="entry name" value="PRK00913.1-1"/>
    <property type="match status" value="1"/>
</dbReference>
<dbReference type="NCBIfam" id="NF002073">
    <property type="entry name" value="PRK00913.1-2"/>
    <property type="match status" value="1"/>
</dbReference>
<dbReference type="NCBIfam" id="NF002074">
    <property type="entry name" value="PRK00913.1-4"/>
    <property type="match status" value="1"/>
</dbReference>
<dbReference type="PANTHER" id="PTHR11963:SF23">
    <property type="entry name" value="CYTOSOL AMINOPEPTIDASE"/>
    <property type="match status" value="1"/>
</dbReference>
<dbReference type="PANTHER" id="PTHR11963">
    <property type="entry name" value="LEUCINE AMINOPEPTIDASE-RELATED"/>
    <property type="match status" value="1"/>
</dbReference>
<dbReference type="Pfam" id="PF00883">
    <property type="entry name" value="Peptidase_M17"/>
    <property type="match status" value="1"/>
</dbReference>
<dbReference type="Pfam" id="PF02789">
    <property type="entry name" value="Peptidase_M17_N"/>
    <property type="match status" value="1"/>
</dbReference>
<dbReference type="PRINTS" id="PR00481">
    <property type="entry name" value="LAMNOPPTDASE"/>
</dbReference>
<dbReference type="SUPFAM" id="SSF52949">
    <property type="entry name" value="Macro domain-like"/>
    <property type="match status" value="1"/>
</dbReference>
<dbReference type="SUPFAM" id="SSF53187">
    <property type="entry name" value="Zn-dependent exopeptidases"/>
    <property type="match status" value="1"/>
</dbReference>
<dbReference type="PROSITE" id="PS00631">
    <property type="entry name" value="CYTOSOL_AP"/>
    <property type="match status" value="1"/>
</dbReference>
<proteinExistence type="inferred from homology"/>
<accession>A8A816</accession>
<sequence length="503" mass="54880">MEFSVKSGSPEKQRSACIVVGVFEPRRLSPIAEQLDKISDGYISALLRRGELEGKPGQTLLLHHVPNVLSERILLIGCGKERELDERQYKQVIQKTINTLNDTGSMEAVCFLTELHVKGRNNYWKVRQAVETAKETLYSFDQLKTNKSEPRRPLRKMVFNVPTRRELTSGERAIQHGLAIAAGIKAAKDLGNMPPNICNAAYLASQARQLADSYSKNVITRVIGEQQMKELGMHSYLAVGQGSQNESLMSVIEYKGNASEDARPIVLVGKGLTFDSGGISIKPSEGMDEMKYDMCGAAAVYGVMRMVAELQLPINVIGVLAGCENMPGGRAYRPGDVLTTMSGQTVEVLNTDAEGRLVLCDVLTYVERFEPEAVIDVATLTGACVIALGHHITGLMANHNPLAHELIAASEQSGDRAWRLPLGDEYQEQLESNFADMANIGGRPGGAITAGCFLSRFTRKYNWAHLDIAGTAWRSGKAKGATGRPVALLAQFLLNRAGFNGEE</sequence>
<name>AMPA_ECOHS</name>
<evidence type="ECO:0000255" key="1">
    <source>
        <dbReference type="HAMAP-Rule" id="MF_00181"/>
    </source>
</evidence>
<gene>
    <name evidence="1" type="primary">pepA</name>
    <name type="ordered locus">EcHS_A4516</name>
</gene>
<protein>
    <recommendedName>
        <fullName evidence="1">Probable cytosol aminopeptidase</fullName>
        <ecNumber evidence="1">3.4.11.1</ecNumber>
    </recommendedName>
    <alternativeName>
        <fullName evidence="1">Leucine aminopeptidase</fullName>
        <shortName evidence="1">LAP</shortName>
        <ecNumber evidence="1">3.4.11.10</ecNumber>
    </alternativeName>
    <alternativeName>
        <fullName evidence="1">Leucyl aminopeptidase</fullName>
    </alternativeName>
</protein>
<keyword id="KW-0031">Aminopeptidase</keyword>
<keyword id="KW-0963">Cytoplasm</keyword>
<keyword id="KW-0378">Hydrolase</keyword>
<keyword id="KW-0464">Manganese</keyword>
<keyword id="KW-0479">Metal-binding</keyword>
<keyword id="KW-0645">Protease</keyword>
<feature type="chain" id="PRO_1000058387" description="Probable cytosol aminopeptidase">
    <location>
        <begin position="1"/>
        <end position="503"/>
    </location>
</feature>
<feature type="active site" evidence="1">
    <location>
        <position position="282"/>
    </location>
</feature>
<feature type="active site" evidence="1">
    <location>
        <position position="356"/>
    </location>
</feature>
<feature type="binding site" evidence="1">
    <location>
        <position position="270"/>
    </location>
    <ligand>
        <name>Mn(2+)</name>
        <dbReference type="ChEBI" id="CHEBI:29035"/>
        <label>2</label>
    </ligand>
</feature>
<feature type="binding site" evidence="1">
    <location>
        <position position="275"/>
    </location>
    <ligand>
        <name>Mn(2+)</name>
        <dbReference type="ChEBI" id="CHEBI:29035"/>
        <label>1</label>
    </ligand>
</feature>
<feature type="binding site" evidence="1">
    <location>
        <position position="275"/>
    </location>
    <ligand>
        <name>Mn(2+)</name>
        <dbReference type="ChEBI" id="CHEBI:29035"/>
        <label>2</label>
    </ligand>
</feature>
<feature type="binding site" evidence="1">
    <location>
        <position position="293"/>
    </location>
    <ligand>
        <name>Mn(2+)</name>
        <dbReference type="ChEBI" id="CHEBI:29035"/>
        <label>2</label>
    </ligand>
</feature>
<feature type="binding site" evidence="1">
    <location>
        <position position="352"/>
    </location>
    <ligand>
        <name>Mn(2+)</name>
        <dbReference type="ChEBI" id="CHEBI:29035"/>
        <label>1</label>
    </ligand>
</feature>
<feature type="binding site" evidence="1">
    <location>
        <position position="354"/>
    </location>
    <ligand>
        <name>Mn(2+)</name>
        <dbReference type="ChEBI" id="CHEBI:29035"/>
        <label>1</label>
    </ligand>
</feature>
<feature type="binding site" evidence="1">
    <location>
        <position position="354"/>
    </location>
    <ligand>
        <name>Mn(2+)</name>
        <dbReference type="ChEBI" id="CHEBI:29035"/>
        <label>2</label>
    </ligand>
</feature>
<comment type="function">
    <text evidence="1">Presumably involved in the processing and regular turnover of intracellular proteins. Catalyzes the removal of unsubstituted N-terminal amino acids from various peptides.</text>
</comment>
<comment type="catalytic activity">
    <reaction evidence="1">
        <text>Release of an N-terminal amino acid, Xaa-|-Yaa-, in which Xaa is preferably Leu, but may be other amino acids including Pro although not Arg or Lys, and Yaa may be Pro. Amino acid amides and methyl esters are also readily hydrolyzed, but rates on arylamides are exceedingly low.</text>
        <dbReference type="EC" id="3.4.11.1"/>
    </reaction>
</comment>
<comment type="catalytic activity">
    <reaction evidence="1">
        <text>Release of an N-terminal amino acid, preferentially leucine, but not glutamic or aspartic acids.</text>
        <dbReference type="EC" id="3.4.11.10"/>
    </reaction>
</comment>
<comment type="cofactor">
    <cofactor evidence="1">
        <name>Mn(2+)</name>
        <dbReference type="ChEBI" id="CHEBI:29035"/>
    </cofactor>
    <text evidence="1">Binds 2 manganese ions per subunit.</text>
</comment>
<comment type="subcellular location">
    <subcellularLocation>
        <location evidence="1">Cytoplasm</location>
    </subcellularLocation>
</comment>
<comment type="similarity">
    <text evidence="1">Belongs to the peptidase M17 family.</text>
</comment>
<reference key="1">
    <citation type="journal article" date="2008" name="J. Bacteriol.">
        <title>The pangenome structure of Escherichia coli: comparative genomic analysis of E. coli commensal and pathogenic isolates.</title>
        <authorList>
            <person name="Rasko D.A."/>
            <person name="Rosovitz M.J."/>
            <person name="Myers G.S.A."/>
            <person name="Mongodin E.F."/>
            <person name="Fricke W.F."/>
            <person name="Gajer P."/>
            <person name="Crabtree J."/>
            <person name="Sebaihia M."/>
            <person name="Thomson N.R."/>
            <person name="Chaudhuri R."/>
            <person name="Henderson I.R."/>
            <person name="Sperandio V."/>
            <person name="Ravel J."/>
        </authorList>
    </citation>
    <scope>NUCLEOTIDE SEQUENCE [LARGE SCALE GENOMIC DNA]</scope>
    <source>
        <strain>HS</strain>
    </source>
</reference>
<organism>
    <name type="scientific">Escherichia coli O9:H4 (strain HS)</name>
    <dbReference type="NCBI Taxonomy" id="331112"/>
    <lineage>
        <taxon>Bacteria</taxon>
        <taxon>Pseudomonadati</taxon>
        <taxon>Pseudomonadota</taxon>
        <taxon>Gammaproteobacteria</taxon>
        <taxon>Enterobacterales</taxon>
        <taxon>Enterobacteriaceae</taxon>
        <taxon>Escherichia</taxon>
    </lineage>
</organism>